<accession>A9BDM4</accession>
<feature type="chain" id="PRO_1000141340" description="Photosystem II reaction center protein I">
    <location>
        <begin position="1"/>
        <end position="42"/>
    </location>
</feature>
<feature type="transmembrane region" description="Helical" evidence="1">
    <location>
        <begin position="6"/>
        <end position="26"/>
    </location>
</feature>
<protein>
    <recommendedName>
        <fullName evidence="1">Photosystem II reaction center protein I</fullName>
        <shortName evidence="1">PSII-I</shortName>
    </recommendedName>
    <alternativeName>
        <fullName evidence="1">PSII 4.4 kDa protein</fullName>
    </alternativeName>
</protein>
<proteinExistence type="inferred from homology"/>
<comment type="function">
    <text evidence="1">One of the components of the core complex of photosystem II (PSII), required for its stability and/or assembly. PSII is a light-driven water:plastoquinone oxidoreductase that uses light energy to abstract electrons from H(2)O, generating O(2) and a proton gradient subsequently used for ATP formation. It consists of a core antenna complex that captures photons, and an electron transfer chain that converts photonic excitation into a charge separation.</text>
</comment>
<comment type="subunit">
    <text evidence="2">PSII is composed of 1 copy each of membrane proteins PsbA, PsbB, PsbC, PsbD, PsbE, PsbF, PsbH, PsbI, PsbJ, PsbK, PsbL, PsbM, PsbT, PsbX, PsbY, Psb30/Ycf12, peripheral proteins PsbO, CyanoQ (PsbQ), PsbU, PsbV and a large number of cofactors. It forms dimeric complexes.</text>
</comment>
<comment type="subcellular location">
    <subcellularLocation>
        <location evidence="1">Cellular thylakoid membrane</location>
        <topology evidence="1">Single-pass membrane protein</topology>
    </subcellularLocation>
</comment>
<comment type="similarity">
    <text evidence="1">Belongs to the PsbI family.</text>
</comment>
<sequence>MLALKISVYTVVFFFVGVFLFGFLASDPSRTPARKDLEGPQD</sequence>
<evidence type="ECO:0000255" key="1">
    <source>
        <dbReference type="HAMAP-Rule" id="MF_01316"/>
    </source>
</evidence>
<evidence type="ECO:0000305" key="2"/>
<name>PSBI_PROM4</name>
<reference key="1">
    <citation type="journal article" date="2007" name="PLoS Genet.">
        <title>Patterns and implications of gene gain and loss in the evolution of Prochlorococcus.</title>
        <authorList>
            <person name="Kettler G.C."/>
            <person name="Martiny A.C."/>
            <person name="Huang K."/>
            <person name="Zucker J."/>
            <person name="Coleman M.L."/>
            <person name="Rodrigue S."/>
            <person name="Chen F."/>
            <person name="Lapidus A."/>
            <person name="Ferriera S."/>
            <person name="Johnson J."/>
            <person name="Steglich C."/>
            <person name="Church G.M."/>
            <person name="Richardson P."/>
            <person name="Chisholm S.W."/>
        </authorList>
    </citation>
    <scope>NUCLEOTIDE SEQUENCE [LARGE SCALE GENOMIC DNA]</scope>
    <source>
        <strain>MIT 9211</strain>
    </source>
</reference>
<keyword id="KW-0472">Membrane</keyword>
<keyword id="KW-0602">Photosynthesis</keyword>
<keyword id="KW-0604">Photosystem II</keyword>
<keyword id="KW-0674">Reaction center</keyword>
<keyword id="KW-1185">Reference proteome</keyword>
<keyword id="KW-0793">Thylakoid</keyword>
<keyword id="KW-0812">Transmembrane</keyword>
<keyword id="KW-1133">Transmembrane helix</keyword>
<dbReference type="EMBL" id="CP000878">
    <property type="protein sequence ID" value="ABX08210.1"/>
    <property type="molecule type" value="Genomic_DNA"/>
</dbReference>
<dbReference type="RefSeq" id="WP_012194835.1">
    <property type="nucleotide sequence ID" value="NC_009976.1"/>
</dbReference>
<dbReference type="SMR" id="A9BDM4"/>
<dbReference type="STRING" id="93059.P9211_02791"/>
<dbReference type="KEGG" id="pmj:P9211_02791"/>
<dbReference type="eggNOG" id="ENOG5033CII">
    <property type="taxonomic scope" value="Bacteria"/>
</dbReference>
<dbReference type="HOGENOM" id="CLU_212150_0_0_3"/>
<dbReference type="Proteomes" id="UP000000788">
    <property type="component" value="Chromosome"/>
</dbReference>
<dbReference type="GO" id="GO:0009539">
    <property type="term" value="C:photosystem II reaction center"/>
    <property type="evidence" value="ECO:0007669"/>
    <property type="project" value="InterPro"/>
</dbReference>
<dbReference type="GO" id="GO:0031676">
    <property type="term" value="C:plasma membrane-derived thylakoid membrane"/>
    <property type="evidence" value="ECO:0007669"/>
    <property type="project" value="UniProtKB-SubCell"/>
</dbReference>
<dbReference type="GO" id="GO:0015979">
    <property type="term" value="P:photosynthesis"/>
    <property type="evidence" value="ECO:0007669"/>
    <property type="project" value="UniProtKB-UniRule"/>
</dbReference>
<dbReference type="HAMAP" id="MF_01316">
    <property type="entry name" value="PSII_PsbI"/>
    <property type="match status" value="1"/>
</dbReference>
<dbReference type="InterPro" id="IPR003686">
    <property type="entry name" value="PSII_PsbI"/>
</dbReference>
<dbReference type="InterPro" id="IPR037271">
    <property type="entry name" value="PSII_PsbI_sf"/>
</dbReference>
<dbReference type="NCBIfam" id="NF002735">
    <property type="entry name" value="PRK02655.1"/>
    <property type="match status" value="1"/>
</dbReference>
<dbReference type="PANTHER" id="PTHR35772">
    <property type="entry name" value="PHOTOSYSTEM II REACTION CENTER PROTEIN I"/>
    <property type="match status" value="1"/>
</dbReference>
<dbReference type="PANTHER" id="PTHR35772:SF1">
    <property type="entry name" value="PHOTOSYSTEM II REACTION CENTER PROTEIN I"/>
    <property type="match status" value="1"/>
</dbReference>
<dbReference type="Pfam" id="PF02532">
    <property type="entry name" value="PsbI"/>
    <property type="match status" value="1"/>
</dbReference>
<dbReference type="SUPFAM" id="SSF161041">
    <property type="entry name" value="Photosystem II reaction center protein I, PsbI"/>
    <property type="match status" value="1"/>
</dbReference>
<gene>
    <name evidence="1" type="primary">psbI</name>
    <name type="ordered locus">P9211_02791</name>
</gene>
<organism>
    <name type="scientific">Prochlorococcus marinus (strain MIT 9211)</name>
    <dbReference type="NCBI Taxonomy" id="93059"/>
    <lineage>
        <taxon>Bacteria</taxon>
        <taxon>Bacillati</taxon>
        <taxon>Cyanobacteriota</taxon>
        <taxon>Cyanophyceae</taxon>
        <taxon>Synechococcales</taxon>
        <taxon>Prochlorococcaceae</taxon>
        <taxon>Prochlorococcus</taxon>
    </lineage>
</organism>